<name>RL30_VIBVU</name>
<protein>
    <recommendedName>
        <fullName evidence="1">Large ribosomal subunit protein uL30</fullName>
    </recommendedName>
    <alternativeName>
        <fullName evidence="2">50S ribosomal protein L30</fullName>
    </alternativeName>
</protein>
<sequence>MATIKVTQTKSSIGRLPKHKATLRGLGLRRINHTVELEDTPCIRGMINKVYYMVKVEE</sequence>
<accession>Q8DE58</accession>
<keyword id="KW-0687">Ribonucleoprotein</keyword>
<keyword id="KW-0689">Ribosomal protein</keyword>
<organism>
    <name type="scientific">Vibrio vulnificus (strain CMCP6)</name>
    <dbReference type="NCBI Taxonomy" id="216895"/>
    <lineage>
        <taxon>Bacteria</taxon>
        <taxon>Pseudomonadati</taxon>
        <taxon>Pseudomonadota</taxon>
        <taxon>Gammaproteobacteria</taxon>
        <taxon>Vibrionales</taxon>
        <taxon>Vibrionaceae</taxon>
        <taxon>Vibrio</taxon>
    </lineage>
</organism>
<feature type="chain" id="PRO_0000273887" description="Large ribosomal subunit protein uL30">
    <location>
        <begin position="1"/>
        <end position="58"/>
    </location>
</feature>
<proteinExistence type="inferred from homology"/>
<evidence type="ECO:0000255" key="1">
    <source>
        <dbReference type="HAMAP-Rule" id="MF_01371"/>
    </source>
</evidence>
<evidence type="ECO:0000305" key="2"/>
<reference key="1">
    <citation type="submission" date="2002-12" db="EMBL/GenBank/DDBJ databases">
        <title>Complete genome sequence of Vibrio vulnificus CMCP6.</title>
        <authorList>
            <person name="Rhee J.H."/>
            <person name="Kim S.Y."/>
            <person name="Chung S.S."/>
            <person name="Kim J.J."/>
            <person name="Moon Y.H."/>
            <person name="Jeong H."/>
            <person name="Choy H.E."/>
        </authorList>
    </citation>
    <scope>NUCLEOTIDE SEQUENCE [LARGE SCALE GENOMIC DNA]</scope>
    <source>
        <strain>CMCP6</strain>
    </source>
</reference>
<comment type="subunit">
    <text evidence="1">Part of the 50S ribosomal subunit.</text>
</comment>
<comment type="similarity">
    <text evidence="1">Belongs to the universal ribosomal protein uL30 family.</text>
</comment>
<gene>
    <name evidence="1" type="primary">rpmD</name>
    <name type="ordered locus">VV1_0742</name>
</gene>
<dbReference type="EMBL" id="AE016795">
    <property type="protein sequence ID" value="AAO09251.1"/>
    <property type="molecule type" value="Genomic_DNA"/>
</dbReference>
<dbReference type="RefSeq" id="WP_011078815.1">
    <property type="nucleotide sequence ID" value="NC_004459.3"/>
</dbReference>
<dbReference type="SMR" id="Q8DE58"/>
<dbReference type="GeneID" id="93895048"/>
<dbReference type="KEGG" id="vvu:VV1_0742"/>
<dbReference type="HOGENOM" id="CLU_131047_1_4_6"/>
<dbReference type="Proteomes" id="UP000002275">
    <property type="component" value="Chromosome 1"/>
</dbReference>
<dbReference type="GO" id="GO:0022625">
    <property type="term" value="C:cytosolic large ribosomal subunit"/>
    <property type="evidence" value="ECO:0007669"/>
    <property type="project" value="TreeGrafter"/>
</dbReference>
<dbReference type="GO" id="GO:0003735">
    <property type="term" value="F:structural constituent of ribosome"/>
    <property type="evidence" value="ECO:0007669"/>
    <property type="project" value="InterPro"/>
</dbReference>
<dbReference type="GO" id="GO:0006412">
    <property type="term" value="P:translation"/>
    <property type="evidence" value="ECO:0007669"/>
    <property type="project" value="UniProtKB-UniRule"/>
</dbReference>
<dbReference type="CDD" id="cd01658">
    <property type="entry name" value="Ribosomal_L30"/>
    <property type="match status" value="1"/>
</dbReference>
<dbReference type="FunFam" id="3.30.1390.20:FF:000001">
    <property type="entry name" value="50S ribosomal protein L30"/>
    <property type="match status" value="1"/>
</dbReference>
<dbReference type="Gene3D" id="3.30.1390.20">
    <property type="entry name" value="Ribosomal protein L30, ferredoxin-like fold domain"/>
    <property type="match status" value="1"/>
</dbReference>
<dbReference type="HAMAP" id="MF_01371_B">
    <property type="entry name" value="Ribosomal_uL30_B"/>
    <property type="match status" value="1"/>
</dbReference>
<dbReference type="InterPro" id="IPR036919">
    <property type="entry name" value="Ribo_uL30_ferredoxin-like_sf"/>
</dbReference>
<dbReference type="InterPro" id="IPR005996">
    <property type="entry name" value="Ribosomal_uL30_bac-type"/>
</dbReference>
<dbReference type="InterPro" id="IPR018038">
    <property type="entry name" value="Ribosomal_uL30_CS"/>
</dbReference>
<dbReference type="InterPro" id="IPR016082">
    <property type="entry name" value="Ribosomal_uL30_ferredoxin-like"/>
</dbReference>
<dbReference type="NCBIfam" id="TIGR01308">
    <property type="entry name" value="rpmD_bact"/>
    <property type="match status" value="1"/>
</dbReference>
<dbReference type="PANTHER" id="PTHR15892:SF2">
    <property type="entry name" value="LARGE RIBOSOMAL SUBUNIT PROTEIN UL30M"/>
    <property type="match status" value="1"/>
</dbReference>
<dbReference type="PANTHER" id="PTHR15892">
    <property type="entry name" value="MITOCHONDRIAL RIBOSOMAL PROTEIN L30"/>
    <property type="match status" value="1"/>
</dbReference>
<dbReference type="Pfam" id="PF00327">
    <property type="entry name" value="Ribosomal_L30"/>
    <property type="match status" value="1"/>
</dbReference>
<dbReference type="PIRSF" id="PIRSF002211">
    <property type="entry name" value="Ribosomal_L30_bac-type"/>
    <property type="match status" value="1"/>
</dbReference>
<dbReference type="SUPFAM" id="SSF55129">
    <property type="entry name" value="Ribosomal protein L30p/L7e"/>
    <property type="match status" value="1"/>
</dbReference>
<dbReference type="PROSITE" id="PS00634">
    <property type="entry name" value="RIBOSOMAL_L30"/>
    <property type="match status" value="1"/>
</dbReference>